<name>RECF_CLOTE</name>
<reference key="1">
    <citation type="journal article" date="2003" name="Proc. Natl. Acad. Sci. U.S.A.">
        <title>The genome sequence of Clostridium tetani, the causative agent of tetanus disease.</title>
        <authorList>
            <person name="Brueggemann H."/>
            <person name="Baeumer S."/>
            <person name="Fricke W.F."/>
            <person name="Wiezer A."/>
            <person name="Liesegang H."/>
            <person name="Decker I."/>
            <person name="Herzberg C."/>
            <person name="Martinez-Arias R."/>
            <person name="Merkl R."/>
            <person name="Henne A."/>
            <person name="Gottschalk G."/>
        </authorList>
    </citation>
    <scope>NUCLEOTIDE SEQUENCE [LARGE SCALE GENOMIC DNA]</scope>
    <source>
        <strain>Massachusetts / E88</strain>
    </source>
</reference>
<evidence type="ECO:0000255" key="1">
    <source>
        <dbReference type="HAMAP-Rule" id="MF_00365"/>
    </source>
</evidence>
<evidence type="ECO:0000305" key="2"/>
<organism>
    <name type="scientific">Clostridium tetani (strain Massachusetts / E88)</name>
    <dbReference type="NCBI Taxonomy" id="212717"/>
    <lineage>
        <taxon>Bacteria</taxon>
        <taxon>Bacillati</taxon>
        <taxon>Bacillota</taxon>
        <taxon>Clostridia</taxon>
        <taxon>Eubacteriales</taxon>
        <taxon>Clostridiaceae</taxon>
        <taxon>Clostridium</taxon>
    </lineage>
</organism>
<proteinExistence type="inferred from homology"/>
<sequence length="367" mass="42684">MYVKYLKLINFRNYKELNIELDKNINVFIGNNAQGKTNVLESIYYASIGRSHRTSKDKELIKWQESNSYIKIYVAKERLDKTIEIRVLKEGKKAINVNSININKLSELFGILNVVIFSPEDLSIVKESPSFRRKFLDIELSKLSKQYYYNLVQYQKVLNERNMLLKKGGDEVPNIIGVYDEQLARFGSNIIREREKYLKKLNDIGKKIHLEITSDKEEISFTYLSSIKNKNMDDGKIEEIFLQEIIKNRNSDIEKRYTSVGPHRDDFLININNVNTRSYGSQGQQRTATLTIKFASLDIIKDEIGEYPVLLLDDVLSELDSSRQKYILSSIRDIQTIITCTGIENIKKYLKNDAKIFKVENGECIEN</sequence>
<protein>
    <recommendedName>
        <fullName evidence="1">DNA replication and repair protein RecF</fullName>
    </recommendedName>
</protein>
<feature type="chain" id="PRO_0000196408" description="DNA replication and repair protein RecF">
    <location>
        <begin position="1"/>
        <end position="367"/>
    </location>
</feature>
<feature type="binding site" evidence="1">
    <location>
        <begin position="30"/>
        <end position="37"/>
    </location>
    <ligand>
        <name>ATP</name>
        <dbReference type="ChEBI" id="CHEBI:30616"/>
    </ligand>
</feature>
<dbReference type="EMBL" id="AE015927">
    <property type="protein sequence ID" value="AAO34745.1"/>
    <property type="status" value="ALT_INIT"/>
    <property type="molecule type" value="Genomic_DNA"/>
</dbReference>
<dbReference type="RefSeq" id="WP_035124340.1">
    <property type="nucleotide sequence ID" value="NC_004557.1"/>
</dbReference>
<dbReference type="SMR" id="Q899S7"/>
<dbReference type="STRING" id="212717.CTC_00092"/>
<dbReference type="GeneID" id="24254866"/>
<dbReference type="KEGG" id="ctc:CTC_00092"/>
<dbReference type="HOGENOM" id="CLU_040267_0_1_9"/>
<dbReference type="OrthoDB" id="9803889at2"/>
<dbReference type="Proteomes" id="UP000001412">
    <property type="component" value="Chromosome"/>
</dbReference>
<dbReference type="GO" id="GO:0005737">
    <property type="term" value="C:cytoplasm"/>
    <property type="evidence" value="ECO:0007669"/>
    <property type="project" value="UniProtKB-SubCell"/>
</dbReference>
<dbReference type="GO" id="GO:0005524">
    <property type="term" value="F:ATP binding"/>
    <property type="evidence" value="ECO:0007669"/>
    <property type="project" value="UniProtKB-UniRule"/>
</dbReference>
<dbReference type="GO" id="GO:0003697">
    <property type="term" value="F:single-stranded DNA binding"/>
    <property type="evidence" value="ECO:0007669"/>
    <property type="project" value="UniProtKB-UniRule"/>
</dbReference>
<dbReference type="GO" id="GO:0006260">
    <property type="term" value="P:DNA replication"/>
    <property type="evidence" value="ECO:0007669"/>
    <property type="project" value="UniProtKB-UniRule"/>
</dbReference>
<dbReference type="GO" id="GO:0000731">
    <property type="term" value="P:DNA synthesis involved in DNA repair"/>
    <property type="evidence" value="ECO:0007669"/>
    <property type="project" value="TreeGrafter"/>
</dbReference>
<dbReference type="GO" id="GO:0006302">
    <property type="term" value="P:double-strand break repair"/>
    <property type="evidence" value="ECO:0007669"/>
    <property type="project" value="TreeGrafter"/>
</dbReference>
<dbReference type="GO" id="GO:0009432">
    <property type="term" value="P:SOS response"/>
    <property type="evidence" value="ECO:0007669"/>
    <property type="project" value="UniProtKB-UniRule"/>
</dbReference>
<dbReference type="CDD" id="cd03242">
    <property type="entry name" value="ABC_RecF"/>
    <property type="match status" value="1"/>
</dbReference>
<dbReference type="Gene3D" id="3.40.50.300">
    <property type="entry name" value="P-loop containing nucleotide triphosphate hydrolases"/>
    <property type="match status" value="1"/>
</dbReference>
<dbReference type="Gene3D" id="1.20.1050.90">
    <property type="entry name" value="RecF/RecN/SMC, N-terminal domain"/>
    <property type="match status" value="1"/>
</dbReference>
<dbReference type="HAMAP" id="MF_00365">
    <property type="entry name" value="RecF"/>
    <property type="match status" value="1"/>
</dbReference>
<dbReference type="InterPro" id="IPR001238">
    <property type="entry name" value="DNA-binding_RecF"/>
</dbReference>
<dbReference type="InterPro" id="IPR018078">
    <property type="entry name" value="DNA-binding_RecF_CS"/>
</dbReference>
<dbReference type="InterPro" id="IPR027417">
    <property type="entry name" value="P-loop_NTPase"/>
</dbReference>
<dbReference type="InterPro" id="IPR003395">
    <property type="entry name" value="RecF/RecN/SMC_N"/>
</dbReference>
<dbReference type="InterPro" id="IPR042174">
    <property type="entry name" value="RecF_2"/>
</dbReference>
<dbReference type="NCBIfam" id="TIGR00611">
    <property type="entry name" value="recf"/>
    <property type="match status" value="1"/>
</dbReference>
<dbReference type="PANTHER" id="PTHR32182">
    <property type="entry name" value="DNA REPLICATION AND REPAIR PROTEIN RECF"/>
    <property type="match status" value="1"/>
</dbReference>
<dbReference type="PANTHER" id="PTHR32182:SF0">
    <property type="entry name" value="DNA REPLICATION AND REPAIR PROTEIN RECF"/>
    <property type="match status" value="1"/>
</dbReference>
<dbReference type="Pfam" id="PF02463">
    <property type="entry name" value="SMC_N"/>
    <property type="match status" value="1"/>
</dbReference>
<dbReference type="SUPFAM" id="SSF52540">
    <property type="entry name" value="P-loop containing nucleoside triphosphate hydrolases"/>
    <property type="match status" value="1"/>
</dbReference>
<dbReference type="PROSITE" id="PS00617">
    <property type="entry name" value="RECF_1"/>
    <property type="match status" value="1"/>
</dbReference>
<dbReference type="PROSITE" id="PS00618">
    <property type="entry name" value="RECF_2"/>
    <property type="match status" value="1"/>
</dbReference>
<comment type="function">
    <text evidence="1">The RecF protein is involved in DNA metabolism; it is required for DNA replication and normal SOS inducibility. RecF binds preferentially to single-stranded, linear DNA. It also seems to bind ATP.</text>
</comment>
<comment type="subcellular location">
    <subcellularLocation>
        <location evidence="1">Cytoplasm</location>
    </subcellularLocation>
</comment>
<comment type="similarity">
    <text evidence="1">Belongs to the RecF family.</text>
</comment>
<comment type="sequence caution" evidence="2">
    <conflict type="erroneous initiation">
        <sequence resource="EMBL-CDS" id="AAO34745"/>
    </conflict>
</comment>
<accession>Q899S7</accession>
<keyword id="KW-0067">ATP-binding</keyword>
<keyword id="KW-0963">Cytoplasm</keyword>
<keyword id="KW-0227">DNA damage</keyword>
<keyword id="KW-0234">DNA repair</keyword>
<keyword id="KW-0235">DNA replication</keyword>
<keyword id="KW-0238">DNA-binding</keyword>
<keyword id="KW-0547">Nucleotide-binding</keyword>
<keyword id="KW-1185">Reference proteome</keyword>
<keyword id="KW-0742">SOS response</keyword>
<gene>
    <name evidence="1" type="primary">recF</name>
    <name type="ordered locus">CTC_00092</name>
</gene>